<gene>
    <name type="primary">glcT</name>
    <name type="ordered locus">SaurJH1_1446</name>
</gene>
<comment type="similarity">
    <text evidence="2">Belongs to the transcriptional antiterminator BglG family. GlcT subfamily.</text>
</comment>
<reference key="1">
    <citation type="submission" date="2007-06" db="EMBL/GenBank/DDBJ databases">
        <title>Complete sequence of chromosome of Staphylococcus aureus subsp. aureus JH1.</title>
        <authorList>
            <consortium name="US DOE Joint Genome Institute"/>
            <person name="Copeland A."/>
            <person name="Lucas S."/>
            <person name="Lapidus A."/>
            <person name="Barry K."/>
            <person name="Detter J.C."/>
            <person name="Glavina del Rio T."/>
            <person name="Hammon N."/>
            <person name="Israni S."/>
            <person name="Dalin E."/>
            <person name="Tice H."/>
            <person name="Pitluck S."/>
            <person name="Chain P."/>
            <person name="Malfatti S."/>
            <person name="Shin M."/>
            <person name="Vergez L."/>
            <person name="Schmutz J."/>
            <person name="Larimer F."/>
            <person name="Land M."/>
            <person name="Hauser L."/>
            <person name="Kyrpides N."/>
            <person name="Ivanova N."/>
            <person name="Tomasz A."/>
            <person name="Richardson P."/>
        </authorList>
    </citation>
    <scope>NUCLEOTIDE SEQUENCE [LARGE SCALE GENOMIC DNA]</scope>
    <source>
        <strain>JH1</strain>
    </source>
</reference>
<evidence type="ECO:0000255" key="1">
    <source>
        <dbReference type="PROSITE-ProRule" id="PRU00704"/>
    </source>
</evidence>
<evidence type="ECO:0000305" key="2"/>
<feature type="chain" id="PRO_0000352601" description="Protein GlcT">
    <location>
        <begin position="1"/>
        <end position="283"/>
    </location>
</feature>
<feature type="domain" description="PRD 1" evidence="1">
    <location>
        <begin position="69"/>
        <end position="173"/>
    </location>
</feature>
<feature type="domain" description="PRD 2" evidence="1">
    <location>
        <begin position="174"/>
        <end position="283"/>
    </location>
</feature>
<sequence>MGEYIVTKTLNNNVVVCTNNDQEVILIGKGIGFNKKEGMALNDQTITIEKIYKLESEQQKAHYKSLVEIADDNVLQVIIDSLNFISNTAMNVDSKQLVVSLTDHIIFAYKRLKQNQVISNPFVMETMQLYSDAYHIAKQVIDQLNAALDVHFPEDEIGFIALHIASNTEDLSMHEMTLINNVIKKGIDIIESDLVTTVDKESLQYQRFIRHVQFLIRRLRRKEYIHAQDDFVSMIKNHYPICYNTAYKILTMIQKQFDVNISESEIIYLTLHIHHFEERINQS</sequence>
<protein>
    <recommendedName>
        <fullName>Protein GlcT</fullName>
    </recommendedName>
</protein>
<name>GLCT_STAA2</name>
<keyword id="KW-0677">Repeat</keyword>
<organism>
    <name type="scientific">Staphylococcus aureus (strain JH1)</name>
    <dbReference type="NCBI Taxonomy" id="359787"/>
    <lineage>
        <taxon>Bacteria</taxon>
        <taxon>Bacillati</taxon>
        <taxon>Bacillota</taxon>
        <taxon>Bacilli</taxon>
        <taxon>Bacillales</taxon>
        <taxon>Staphylococcaceae</taxon>
        <taxon>Staphylococcus</taxon>
    </lineage>
</organism>
<dbReference type="EMBL" id="CP000736">
    <property type="protein sequence ID" value="ABR52296.1"/>
    <property type="molecule type" value="Genomic_DNA"/>
</dbReference>
<dbReference type="SMR" id="A6U1H8"/>
<dbReference type="KEGG" id="sah:SaurJH1_1446"/>
<dbReference type="HOGENOM" id="CLU_078802_0_0_9"/>
<dbReference type="GO" id="GO:0003723">
    <property type="term" value="F:RNA binding"/>
    <property type="evidence" value="ECO:0007669"/>
    <property type="project" value="InterPro"/>
</dbReference>
<dbReference type="GO" id="GO:0045893">
    <property type="term" value="P:positive regulation of DNA-templated transcription"/>
    <property type="evidence" value="ECO:0007669"/>
    <property type="project" value="InterPro"/>
</dbReference>
<dbReference type="Gene3D" id="1.20.58.1950">
    <property type="match status" value="1"/>
</dbReference>
<dbReference type="Gene3D" id="1.20.890.100">
    <property type="match status" value="1"/>
</dbReference>
<dbReference type="Gene3D" id="2.30.24.10">
    <property type="entry name" value="CAT RNA-binding domain"/>
    <property type="match status" value="1"/>
</dbReference>
<dbReference type="Gene3D" id="1.10.1790.10">
    <property type="entry name" value="PRD domain"/>
    <property type="match status" value="1"/>
</dbReference>
<dbReference type="InterPro" id="IPR050661">
    <property type="entry name" value="BglG_antiterminators"/>
</dbReference>
<dbReference type="InterPro" id="IPR004341">
    <property type="entry name" value="CAT_RNA-bd_dom"/>
</dbReference>
<dbReference type="InterPro" id="IPR036650">
    <property type="entry name" value="CAT_RNA-bd_dom_sf"/>
</dbReference>
<dbReference type="InterPro" id="IPR011608">
    <property type="entry name" value="PRD"/>
</dbReference>
<dbReference type="InterPro" id="IPR036634">
    <property type="entry name" value="PRD_sf"/>
</dbReference>
<dbReference type="InterPro" id="IPR001550">
    <property type="entry name" value="Transcrpt_antitermin_CS"/>
</dbReference>
<dbReference type="NCBIfam" id="NF047357">
    <property type="entry name" value="antiterm_GlcT"/>
    <property type="match status" value="1"/>
</dbReference>
<dbReference type="PANTHER" id="PTHR30185">
    <property type="entry name" value="CRYPTIC BETA-GLUCOSIDE BGL OPERON ANTITERMINATOR"/>
    <property type="match status" value="1"/>
</dbReference>
<dbReference type="PANTHER" id="PTHR30185:SF16">
    <property type="entry name" value="PROTEIN GLCT"/>
    <property type="match status" value="1"/>
</dbReference>
<dbReference type="Pfam" id="PF03123">
    <property type="entry name" value="CAT_RBD"/>
    <property type="match status" value="1"/>
</dbReference>
<dbReference type="Pfam" id="PF00874">
    <property type="entry name" value="PRD"/>
    <property type="match status" value="2"/>
</dbReference>
<dbReference type="SMART" id="SM01061">
    <property type="entry name" value="CAT_RBD"/>
    <property type="match status" value="1"/>
</dbReference>
<dbReference type="SUPFAM" id="SSF63520">
    <property type="entry name" value="PTS-regulatory domain, PRD"/>
    <property type="match status" value="2"/>
</dbReference>
<dbReference type="SUPFAM" id="SSF50151">
    <property type="entry name" value="SacY-like RNA-binding domain"/>
    <property type="match status" value="1"/>
</dbReference>
<dbReference type="PROSITE" id="PS00654">
    <property type="entry name" value="PRD_1"/>
    <property type="match status" value="1"/>
</dbReference>
<dbReference type="PROSITE" id="PS51372">
    <property type="entry name" value="PRD_2"/>
    <property type="match status" value="2"/>
</dbReference>
<accession>A6U1H8</accession>
<proteinExistence type="inferred from homology"/>